<name>REEP5_DANRE</name>
<evidence type="ECO:0000250" key="1">
    <source>
        <dbReference type="UniProtKB" id="Q00765"/>
    </source>
</evidence>
<evidence type="ECO:0000250" key="2">
    <source>
        <dbReference type="UniProtKB" id="Q60870"/>
    </source>
</evidence>
<evidence type="ECO:0000255" key="3"/>
<evidence type="ECO:0000255" key="4">
    <source>
        <dbReference type="RuleBase" id="RU362006"/>
    </source>
</evidence>
<evidence type="ECO:0000269" key="5">
    <source>
    </source>
</evidence>
<evidence type="ECO:0000305" key="6"/>
<evidence type="ECO:0000312" key="7">
    <source>
        <dbReference type="EMBL" id="AAH59545.1"/>
    </source>
</evidence>
<evidence type="ECO:0000312" key="8">
    <source>
        <dbReference type="Proteomes" id="UP000000437"/>
    </source>
</evidence>
<evidence type="ECO:0000312" key="9">
    <source>
        <dbReference type="ZFIN" id="ZDB-GENE-030131-9181"/>
    </source>
</evidence>
<organism evidence="7">
    <name type="scientific">Danio rerio</name>
    <name type="common">Zebrafish</name>
    <name type="synonym">Brachydanio rerio</name>
    <dbReference type="NCBI Taxonomy" id="7955"/>
    <lineage>
        <taxon>Eukaryota</taxon>
        <taxon>Metazoa</taxon>
        <taxon>Chordata</taxon>
        <taxon>Craniata</taxon>
        <taxon>Vertebrata</taxon>
        <taxon>Euteleostomi</taxon>
        <taxon>Actinopterygii</taxon>
        <taxon>Neopterygii</taxon>
        <taxon>Teleostei</taxon>
        <taxon>Ostariophysi</taxon>
        <taxon>Cypriniformes</taxon>
        <taxon>Danionidae</taxon>
        <taxon>Danioninae</taxon>
        <taxon>Danio</taxon>
    </lineage>
</organism>
<proteinExistence type="evidence at protein level"/>
<protein>
    <recommendedName>
        <fullName evidence="6">Receptor expression-enhancing protein 5</fullName>
    </recommendedName>
</protein>
<feature type="chain" id="PRO_0000454705" description="Receptor expression-enhancing protein 5">
    <location>
        <begin position="1"/>
        <end position="189"/>
    </location>
</feature>
<feature type="topological domain" description="Cytoplasmic" evidence="1">
    <location>
        <begin position="1"/>
        <end position="34"/>
    </location>
</feature>
<feature type="transmembrane region" description="Helical" evidence="3">
    <location>
        <begin position="35"/>
        <end position="51"/>
    </location>
</feature>
<feature type="topological domain" description="Lumenal" evidence="6">
    <location>
        <begin position="52"/>
        <end position="57"/>
    </location>
</feature>
<feature type="transmembrane region" description="Helical" evidence="3">
    <location>
        <begin position="58"/>
        <end position="75"/>
    </location>
</feature>
<feature type="topological domain" description="Cytoplasmic" evidence="6">
    <location>
        <begin position="76"/>
        <end position="94"/>
    </location>
</feature>
<feature type="transmembrane region" description="Helical" evidence="3">
    <location>
        <begin position="95"/>
        <end position="115"/>
    </location>
</feature>
<feature type="topological domain" description="Lumenal" evidence="6">
    <location>
        <begin position="116"/>
        <end position="117"/>
    </location>
</feature>
<feature type="transmembrane region" description="Helical" evidence="3">
    <location>
        <begin position="118"/>
        <end position="138"/>
    </location>
</feature>
<feature type="topological domain" description="Cytoplasmic" evidence="1">
    <location>
        <begin position="139"/>
        <end position="189"/>
    </location>
</feature>
<feature type="region of interest" description="Required for dimerization and maintaining endoplasmic reticulum morphology" evidence="1">
    <location>
        <begin position="114"/>
        <end position="185"/>
    </location>
</feature>
<sequence>MAAALKQRFDNALHEKNMVTDLLAKIEAKTGVNRSYIAYAVIAFIAIYLVIGYGASLLCNLIGFVYPAYISIKAIESPAKDDDTKWLTYWVVYGVFSVVEFFADIFLSWFPFYFLAKCAFLVWCMAPTPSNGSIMLYTRIIRPFFLKNEAKIDNVMKDLTDKAAGAADKIKDEAKKATANIMFEEKKHY</sequence>
<gene>
    <name evidence="9" type="primary">reep5</name>
</gene>
<accession>Q6PBX9</accession>
<comment type="function">
    <text evidence="5">Plays an essential role in heart function and development by regulating the organization and function of the sarcoplasmic reticulum in cardiomyocytes.</text>
</comment>
<comment type="subcellular location">
    <subcellularLocation>
        <location evidence="2">Endoplasmic reticulum membrane</location>
        <topology evidence="3">Multi-pass membrane protein</topology>
    </subcellularLocation>
    <subcellularLocation>
        <location evidence="2">Sarcoplasmic reticulum membrane</location>
        <topology evidence="3">Multi-pass membrane protein</topology>
    </subcellularLocation>
</comment>
<comment type="developmental stage">
    <text evidence="5">Expressed in embryos 48 to 96 hours post-fertilization (at protein level) (PubMed:32075961). Expressed in both ventricular and atrial cardiomyocytes (at protein level) (PubMed:32075961).</text>
</comment>
<comment type="domain">
    <text evidence="1">The short lumenal loops between transmembrane domains 1 and 2 and between transmembrane domains 3 and 4 may impart a wedge-like configuration, thus deforming membranes.</text>
</comment>
<comment type="disruption phenotype">
    <text evidence="5">60% of embryos die 7 days post-fertilization (PubMed:32075961). Embryos have cardiac developmental defects including a lack of cardiac looping and atrio-ventricular conduction defects with dysynchronous beating rhythms (PubMed:32075961). Increase in RTN4 protein expression levels (PubMed:32075961). Morpholino knockdown causes apparent sarcoplasmic reticulum membrane vacuolization in ventricular tissue along with structural discontinuity between sarcomeres (PubMed:32075961).</text>
</comment>
<comment type="similarity">
    <text evidence="4">Belongs to the DP1 family.</text>
</comment>
<reference evidence="8" key="1">
    <citation type="journal article" date="2013" name="Nature">
        <title>The zebrafish reference genome sequence and its relationship to the human genome.</title>
        <authorList>
            <person name="Howe K."/>
            <person name="Clark M.D."/>
            <person name="Torroja C.F."/>
            <person name="Torrance J."/>
            <person name="Berthelot C."/>
            <person name="Muffato M."/>
            <person name="Collins J.E."/>
            <person name="Humphray S."/>
            <person name="McLaren K."/>
            <person name="Matthews L."/>
            <person name="McLaren S."/>
            <person name="Sealy I."/>
            <person name="Caccamo M."/>
            <person name="Churcher C."/>
            <person name="Scott C."/>
            <person name="Barrett J.C."/>
            <person name="Koch R."/>
            <person name="Rauch G.J."/>
            <person name="White S."/>
            <person name="Chow W."/>
            <person name="Kilian B."/>
            <person name="Quintais L.T."/>
            <person name="Guerra-Assuncao J.A."/>
            <person name="Zhou Y."/>
            <person name="Gu Y."/>
            <person name="Yen J."/>
            <person name="Vogel J.H."/>
            <person name="Eyre T."/>
            <person name="Redmond S."/>
            <person name="Banerjee R."/>
            <person name="Chi J."/>
            <person name="Fu B."/>
            <person name="Langley E."/>
            <person name="Maguire S.F."/>
            <person name="Laird G.K."/>
            <person name="Lloyd D."/>
            <person name="Kenyon E."/>
            <person name="Donaldson S."/>
            <person name="Sehra H."/>
            <person name="Almeida-King J."/>
            <person name="Loveland J."/>
            <person name="Trevanion S."/>
            <person name="Jones M."/>
            <person name="Quail M."/>
            <person name="Willey D."/>
            <person name="Hunt A."/>
            <person name="Burton J."/>
            <person name="Sims S."/>
            <person name="McLay K."/>
            <person name="Plumb B."/>
            <person name="Davis J."/>
            <person name="Clee C."/>
            <person name="Oliver K."/>
            <person name="Clark R."/>
            <person name="Riddle C."/>
            <person name="Elliot D."/>
            <person name="Threadgold G."/>
            <person name="Harden G."/>
            <person name="Ware D."/>
            <person name="Begum S."/>
            <person name="Mortimore B."/>
            <person name="Kerry G."/>
            <person name="Heath P."/>
            <person name="Phillimore B."/>
            <person name="Tracey A."/>
            <person name="Corby N."/>
            <person name="Dunn M."/>
            <person name="Johnson C."/>
            <person name="Wood J."/>
            <person name="Clark S."/>
            <person name="Pelan S."/>
            <person name="Griffiths G."/>
            <person name="Smith M."/>
            <person name="Glithero R."/>
            <person name="Howden P."/>
            <person name="Barker N."/>
            <person name="Lloyd C."/>
            <person name="Stevens C."/>
            <person name="Harley J."/>
            <person name="Holt K."/>
            <person name="Panagiotidis G."/>
            <person name="Lovell J."/>
            <person name="Beasley H."/>
            <person name="Henderson C."/>
            <person name="Gordon D."/>
            <person name="Auger K."/>
            <person name="Wright D."/>
            <person name="Collins J."/>
            <person name="Raisen C."/>
            <person name="Dyer L."/>
            <person name="Leung K."/>
            <person name="Robertson L."/>
            <person name="Ambridge K."/>
            <person name="Leongamornlert D."/>
            <person name="McGuire S."/>
            <person name="Gilderthorp R."/>
            <person name="Griffiths C."/>
            <person name="Manthravadi D."/>
            <person name="Nichol S."/>
            <person name="Barker G."/>
            <person name="Whitehead S."/>
            <person name="Kay M."/>
            <person name="Brown J."/>
            <person name="Murnane C."/>
            <person name="Gray E."/>
            <person name="Humphries M."/>
            <person name="Sycamore N."/>
            <person name="Barker D."/>
            <person name="Saunders D."/>
            <person name="Wallis J."/>
            <person name="Babbage A."/>
            <person name="Hammond S."/>
            <person name="Mashreghi-Mohammadi M."/>
            <person name="Barr L."/>
            <person name="Martin S."/>
            <person name="Wray P."/>
            <person name="Ellington A."/>
            <person name="Matthews N."/>
            <person name="Ellwood M."/>
            <person name="Woodmansey R."/>
            <person name="Clark G."/>
            <person name="Cooper J."/>
            <person name="Tromans A."/>
            <person name="Grafham D."/>
            <person name="Skuce C."/>
            <person name="Pandian R."/>
            <person name="Andrews R."/>
            <person name="Harrison E."/>
            <person name="Kimberley A."/>
            <person name="Garnett J."/>
            <person name="Fosker N."/>
            <person name="Hall R."/>
            <person name="Garner P."/>
            <person name="Kelly D."/>
            <person name="Bird C."/>
            <person name="Palmer S."/>
            <person name="Gehring I."/>
            <person name="Berger A."/>
            <person name="Dooley C.M."/>
            <person name="Ersan-Urun Z."/>
            <person name="Eser C."/>
            <person name="Geiger H."/>
            <person name="Geisler M."/>
            <person name="Karotki L."/>
            <person name="Kirn A."/>
            <person name="Konantz J."/>
            <person name="Konantz M."/>
            <person name="Oberlander M."/>
            <person name="Rudolph-Geiger S."/>
            <person name="Teucke M."/>
            <person name="Lanz C."/>
            <person name="Raddatz G."/>
            <person name="Osoegawa K."/>
            <person name="Zhu B."/>
            <person name="Rapp A."/>
            <person name="Widaa S."/>
            <person name="Langford C."/>
            <person name="Yang F."/>
            <person name="Schuster S.C."/>
            <person name="Carter N.P."/>
            <person name="Harrow J."/>
            <person name="Ning Z."/>
            <person name="Herrero J."/>
            <person name="Searle S.M."/>
            <person name="Enright A."/>
            <person name="Geisler R."/>
            <person name="Plasterk R.H."/>
            <person name="Lee C."/>
            <person name="Westerfield M."/>
            <person name="de Jong P.J."/>
            <person name="Zon L.I."/>
            <person name="Postlethwait J.H."/>
            <person name="Nusslein-Volhard C."/>
            <person name="Hubbard T.J."/>
            <person name="Roest Crollius H."/>
            <person name="Rogers J."/>
            <person name="Stemple D.L."/>
        </authorList>
    </citation>
    <scope>NUCLEOTIDE SEQUENCE [LARGE SCALE GENOMIC DNA]</scope>
    <source>
        <strain evidence="8">Tuebingen</strain>
    </source>
</reference>
<reference evidence="7" key="2">
    <citation type="submission" date="2003-10" db="EMBL/GenBank/DDBJ databases">
        <authorList>
            <consortium name="NIH - Zebrafish Gene Collection (ZGC) project"/>
        </authorList>
    </citation>
    <scope>NUCLEOTIDE SEQUENCE [LARGE SCALE MRNA]</scope>
    <source>
        <tissue evidence="7">Eye</tissue>
    </source>
</reference>
<reference evidence="6" key="3">
    <citation type="journal article" date="2020" name="Nat. Commun.">
        <title>REEP5 depletion causes sarco-endoplasmic reticulum vacuolization and cardiac functional defects.</title>
        <authorList>
            <person name="Lee S.H."/>
            <person name="Hadipour-Lakmehsari S."/>
            <person name="Murthy H.R."/>
            <person name="Gibb N."/>
            <person name="Miyake T."/>
            <person name="Teng A.C.T."/>
            <person name="Cosme J."/>
            <person name="Yu J.C."/>
            <person name="Moon M."/>
            <person name="Lim S."/>
            <person name="Wong V."/>
            <person name="Liu P."/>
            <person name="Billia F."/>
            <person name="Fernandez-Gonzalez R."/>
            <person name="Stagljar I."/>
            <person name="Sharma P."/>
            <person name="Kislinger T."/>
            <person name="Scott I.C."/>
            <person name="Gramolini A.O."/>
        </authorList>
    </citation>
    <scope>FUNCTION</scope>
    <scope>DEVELOPMENTAL STAGE</scope>
    <scope>DISRUPTION PHENOTYPE</scope>
</reference>
<dbReference type="EMBL" id="BX005434">
    <property type="status" value="NOT_ANNOTATED_CDS"/>
    <property type="molecule type" value="Genomic_DNA"/>
</dbReference>
<dbReference type="EMBL" id="BC059545">
    <property type="protein sequence ID" value="AAH59545.1"/>
    <property type="molecule type" value="mRNA"/>
</dbReference>
<dbReference type="RefSeq" id="NP_956352.1">
    <property type="nucleotide sequence ID" value="NM_200058.1"/>
</dbReference>
<dbReference type="FunCoup" id="Q6PBX9">
    <property type="interactions" value="1459"/>
</dbReference>
<dbReference type="STRING" id="7955.ENSDARP00000137299"/>
<dbReference type="PaxDb" id="7955-ENSDARP00000069043"/>
<dbReference type="Ensembl" id="ENSDART00000164770">
    <property type="protein sequence ID" value="ENSDARP00000137299"/>
    <property type="gene ID" value="ENSDARG00000100742"/>
</dbReference>
<dbReference type="GeneID" id="337237"/>
<dbReference type="KEGG" id="dre:337237"/>
<dbReference type="AGR" id="ZFIN:ZDB-GENE-030131-9181"/>
<dbReference type="CTD" id="7905"/>
<dbReference type="ZFIN" id="ZDB-GENE-030131-9181">
    <property type="gene designation" value="reep5"/>
</dbReference>
<dbReference type="eggNOG" id="KOG1725">
    <property type="taxonomic scope" value="Eukaryota"/>
</dbReference>
<dbReference type="HOGENOM" id="CLU_028431_2_0_1"/>
<dbReference type="InParanoid" id="Q6PBX9"/>
<dbReference type="OMA" id="DTQYWVV"/>
<dbReference type="OrthoDB" id="10009287at2759"/>
<dbReference type="PhylomeDB" id="Q6PBX9"/>
<dbReference type="TreeFam" id="TF314913"/>
<dbReference type="PRO" id="PR:Q6PBX9"/>
<dbReference type="Proteomes" id="UP000000437">
    <property type="component" value="Chromosome 10"/>
</dbReference>
<dbReference type="Bgee" id="ENSDARG00000100742">
    <property type="expression patterns" value="Expressed in zone of skin and 45 other cell types or tissues"/>
</dbReference>
<dbReference type="GO" id="GO:0033017">
    <property type="term" value="C:sarcoplasmic reticulum membrane"/>
    <property type="evidence" value="ECO:0007669"/>
    <property type="project" value="UniProtKB-SubCell"/>
</dbReference>
<dbReference type="GO" id="GO:0090158">
    <property type="term" value="P:endoplasmic reticulum membrane organization"/>
    <property type="evidence" value="ECO:0000315"/>
    <property type="project" value="UniProtKB"/>
</dbReference>
<dbReference type="InterPro" id="IPR004345">
    <property type="entry name" value="TB2_DP1_HVA22"/>
</dbReference>
<dbReference type="PANTHER" id="PTHR12300">
    <property type="entry name" value="HVA22-LIKE PROTEINS"/>
    <property type="match status" value="1"/>
</dbReference>
<dbReference type="PANTHER" id="PTHR12300:SF93">
    <property type="entry name" value="RECEPTOR EXPRESSION-ENHANCING PROTEIN 5"/>
    <property type="match status" value="1"/>
</dbReference>
<dbReference type="Pfam" id="PF03134">
    <property type="entry name" value="TB2_DP1_HVA22"/>
    <property type="match status" value="1"/>
</dbReference>
<keyword id="KW-0256">Endoplasmic reticulum</keyword>
<keyword id="KW-0472">Membrane</keyword>
<keyword id="KW-1185">Reference proteome</keyword>
<keyword id="KW-0703">Sarcoplasmic reticulum</keyword>
<keyword id="KW-0812">Transmembrane</keyword>
<keyword id="KW-1133">Transmembrane helix</keyword>